<feature type="chain" id="PRO_0000222159" description="Transcriptional activator VP30">
    <location>
        <begin position="1"/>
        <end position="281"/>
    </location>
</feature>
<feature type="zinc finger region" description="C3H1-type; atypical" evidence="1">
    <location>
        <begin position="78"/>
        <end position="96"/>
    </location>
</feature>
<feature type="region of interest" description="Disordered" evidence="3">
    <location>
        <begin position="1"/>
        <end position="73"/>
    </location>
</feature>
<feature type="region of interest" description="Disordered" evidence="3">
    <location>
        <begin position="118"/>
        <end position="144"/>
    </location>
</feature>
<feature type="compositionally biased region" description="Basic residues" evidence="3">
    <location>
        <begin position="1"/>
        <end position="12"/>
    </location>
</feature>
<feature type="compositionally biased region" description="Low complexity" evidence="3">
    <location>
        <begin position="39"/>
        <end position="51"/>
    </location>
</feature>
<feature type="compositionally biased region" description="Polar residues" evidence="3">
    <location>
        <begin position="123"/>
        <end position="135"/>
    </location>
</feature>
<feature type="sequence variant" description="In strain: Isolate Feldmann.">
    <original>S</original>
    <variation>M</variation>
    <location>
        <position position="124"/>
    </location>
</feature>
<feature type="helix" evidence="5">
    <location>
        <begin position="151"/>
        <end position="162"/>
    </location>
</feature>
<feature type="helix" evidence="5">
    <location>
        <begin position="166"/>
        <end position="168"/>
    </location>
</feature>
<feature type="helix" evidence="5">
    <location>
        <begin position="171"/>
        <end position="187"/>
    </location>
</feature>
<feature type="helix" evidence="5">
    <location>
        <begin position="190"/>
        <end position="192"/>
    </location>
</feature>
<feature type="helix" evidence="5">
    <location>
        <begin position="193"/>
        <end position="204"/>
    </location>
</feature>
<feature type="helix" evidence="5">
    <location>
        <begin position="208"/>
        <end position="210"/>
    </location>
</feature>
<feature type="helix" evidence="5">
    <location>
        <begin position="211"/>
        <end position="223"/>
    </location>
</feature>
<feature type="helix" evidence="5">
    <location>
        <begin position="228"/>
        <end position="236"/>
    </location>
</feature>
<feature type="helix" evidence="5">
    <location>
        <begin position="239"/>
        <end position="253"/>
    </location>
</feature>
<feature type="helix" evidence="5">
    <location>
        <begin position="262"/>
        <end position="272"/>
    </location>
</feature>
<name>VP30_MABVM</name>
<organismHost>
    <name type="scientific">Chlorocebus aethiops</name>
    <name type="common">Green monkey</name>
    <name type="synonym">Cercopithecus aethiops</name>
    <dbReference type="NCBI Taxonomy" id="9534"/>
</organismHost>
<organismHost>
    <name type="scientific">Homo sapiens</name>
    <name type="common">Human</name>
    <dbReference type="NCBI Taxonomy" id="9606"/>
</organismHost>
<organismHost>
    <name type="scientific">Rousettus aegyptiacus</name>
    <name type="common">Egyptian fruit bat</name>
    <name type="synonym">Pteropus aegyptiacus</name>
    <dbReference type="NCBI Taxonomy" id="9407"/>
</organismHost>
<evidence type="ECO:0000250" key="1"/>
<evidence type="ECO:0000250" key="2">
    <source>
        <dbReference type="UniProtKB" id="Q05323"/>
    </source>
</evidence>
<evidence type="ECO:0000256" key="3">
    <source>
        <dbReference type="SAM" id="MobiDB-lite"/>
    </source>
</evidence>
<evidence type="ECO:0000305" key="4"/>
<evidence type="ECO:0007829" key="5">
    <source>
        <dbReference type="PDB" id="5T3W"/>
    </source>
</evidence>
<comment type="function">
    <text evidence="1">Acts as a transcription anti-termination factor immediately after transcription initiation, but does not affect transcription elongation. This function has been found to be dependent on the formation of an RNA secondary structure at the transcription start site of the first gene (By similarity).</text>
</comment>
<comment type="subunit">
    <text evidence="1">Homooligomer.</text>
</comment>
<comment type="subcellular location">
    <subcellularLocation>
        <location>Virion</location>
    </subcellularLocation>
    <subcellularLocation>
        <location evidence="1">Host cytoplasm</location>
    </subcellularLocation>
    <text>Tightly bound in the nucleocapsid.</text>
</comment>
<comment type="PTM">
    <text evidence="1">Phosphorylated by host. Phosphorylation negatively regulates the transcription activation (By similarity).</text>
</comment>
<comment type="similarity">
    <text evidence="4">Belongs to the filoviridae transcriptional activator VP30 family.</text>
</comment>
<comment type="sequence caution" evidence="4">
    <conflict type="frameshift">
        <sequence resource="EMBL-CDS" id="CAA78118"/>
    </conflict>
</comment>
<dbReference type="EMBL" id="Z12132">
    <property type="protein sequence ID" value="CAA78118.1"/>
    <property type="status" value="ALT_FRAME"/>
    <property type="molecule type" value="mRNA"/>
</dbReference>
<dbReference type="EMBL" id="AY430365">
    <property type="protein sequence ID" value="AAR85464.1"/>
    <property type="molecule type" value="Genomic_RNA"/>
</dbReference>
<dbReference type="EMBL" id="AY430366">
    <property type="protein sequence ID" value="AAR85457.1"/>
    <property type="molecule type" value="Genomic_RNA"/>
</dbReference>
<dbReference type="EMBL" id="DQ217792">
    <property type="protein sequence ID" value="ABA87128.1"/>
    <property type="molecule type" value="Genomic_RNA"/>
</dbReference>
<dbReference type="RefSeq" id="YP_001531157.1">
    <property type="nucleotide sequence ID" value="NC_001608.3"/>
</dbReference>
<dbReference type="PDB" id="5T3W">
    <property type="method" value="X-ray"/>
    <property type="resolution" value="3.25 A"/>
    <property type="chains" value="A/B/C/D/E/F/G/H=146-281"/>
</dbReference>
<dbReference type="PDBsum" id="5T3W"/>
<dbReference type="SMR" id="P35258"/>
<dbReference type="DNASU" id="920942"/>
<dbReference type="GeneID" id="920942"/>
<dbReference type="KEGG" id="vg:920942"/>
<dbReference type="Proteomes" id="UP000007771">
    <property type="component" value="Genome"/>
</dbReference>
<dbReference type="Proteomes" id="UP000137266">
    <property type="component" value="Genome"/>
</dbReference>
<dbReference type="Proteomes" id="UP000160614">
    <property type="component" value="Genome"/>
</dbReference>
<dbReference type="Proteomes" id="UP000180448">
    <property type="component" value="Segment"/>
</dbReference>
<dbReference type="GO" id="GO:0030430">
    <property type="term" value="C:host cell cytoplasm"/>
    <property type="evidence" value="ECO:0007669"/>
    <property type="project" value="UniProtKB-SubCell"/>
</dbReference>
<dbReference type="GO" id="GO:0019013">
    <property type="term" value="C:viral nucleocapsid"/>
    <property type="evidence" value="ECO:0000314"/>
    <property type="project" value="CACAO"/>
</dbReference>
<dbReference type="GO" id="GO:0003723">
    <property type="term" value="F:RNA binding"/>
    <property type="evidence" value="ECO:0007669"/>
    <property type="project" value="InterPro"/>
</dbReference>
<dbReference type="GO" id="GO:0008270">
    <property type="term" value="F:zinc ion binding"/>
    <property type="evidence" value="ECO:0007669"/>
    <property type="project" value="UniProtKB-KW"/>
</dbReference>
<dbReference type="FunFam" id="1.20.120.1160:FF:000001">
    <property type="entry name" value="Minor nucleoprotein VP30"/>
    <property type="match status" value="1"/>
</dbReference>
<dbReference type="Gene3D" id="1.20.120.1160">
    <property type="match status" value="1"/>
</dbReference>
<dbReference type="InterPro" id="IPR014459">
    <property type="entry name" value="VP30_FiloV"/>
</dbReference>
<dbReference type="Pfam" id="PF11507">
    <property type="entry name" value="Transcript_VP30"/>
    <property type="match status" value="1"/>
</dbReference>
<dbReference type="PIRSF" id="PIRSF011356">
    <property type="entry name" value="VP30_FiloV"/>
    <property type="match status" value="1"/>
</dbReference>
<accession>P35258</accession>
<accession>Q38L41</accession>
<accession>Q6T6T9</accession>
<sequence>MQQPRGRSRTRNHQVTPTIYHETQLPSKPHYTNYHPRARSMSSTRSSAESSPTNHIPRARPPSTFNLSKPPPPPKDMCRNMKIGLPCADPTCNRDHDLDNLTNRELLLLMARKMLPNTDKTFRSPQDCGSPSLSKGLSKDKQEQTKDVLTLENLGHILSYLHRSEIGKLDETSLRAALSLTCAGIRKTNRSLINTMTELHMNHENLPQDQNGVIKQTYTGIHLDKGGQFEAALWQGWDKRSISLFVQAALYVMNNIPCESSISVQASYDHFILPQSQGKGQ</sequence>
<protein>
    <recommendedName>
        <fullName evidence="2">Transcriptional activator VP30</fullName>
    </recommendedName>
    <alternativeName>
        <fullName>Minor nucleoprotein VP30</fullName>
    </alternativeName>
</protein>
<proteinExistence type="evidence at protein level"/>
<gene>
    <name type="primary">VP30</name>
</gene>
<organism>
    <name type="scientific">Lake Victoria marburgvirus (strain Musoke-80)</name>
    <name type="common">MARV</name>
    <name type="synonym">Marburg virus (strain Kenya/Musoke/1980)</name>
    <dbReference type="NCBI Taxonomy" id="33727"/>
    <lineage>
        <taxon>Viruses</taxon>
        <taxon>Riboviria</taxon>
        <taxon>Orthornavirae</taxon>
        <taxon>Negarnaviricota</taxon>
        <taxon>Haploviricotina</taxon>
        <taxon>Monjiviricetes</taxon>
        <taxon>Mononegavirales</taxon>
        <taxon>Filoviridae</taxon>
        <taxon>Orthomarburgvirus</taxon>
        <taxon>Orthomarburgvirus marburgense</taxon>
    </lineage>
</organism>
<keyword id="KW-0002">3D-structure</keyword>
<keyword id="KW-1035">Host cytoplasm</keyword>
<keyword id="KW-0479">Metal-binding</keyword>
<keyword id="KW-0597">Phosphoprotein</keyword>
<keyword id="KW-1185">Reference proteome</keyword>
<keyword id="KW-0804">Transcription</keyword>
<keyword id="KW-0543">Viral nucleoprotein</keyword>
<keyword id="KW-0946">Virion</keyword>
<keyword id="KW-0862">Zinc</keyword>
<keyword id="KW-0863">Zinc-finger</keyword>
<reference key="1">
    <citation type="journal article" date="1992" name="Virus Res.">
        <title>Marburg virus, a filovirus: messenger RNAs, gene order, and regulatory elements of the replication cycle.</title>
        <authorList>
            <person name="Feldmann H."/>
            <person name="Muehlberger E."/>
            <person name="Randolf A."/>
            <person name="Will C."/>
            <person name="Kiley M.P."/>
            <person name="Sanchez A."/>
            <person name="Klenk H.-D."/>
        </authorList>
    </citation>
    <scope>NUCLEOTIDE SEQUENCE [MRNA]</scope>
    <source>
        <strain>Isolate Feldmann</strain>
    </source>
</reference>
<reference key="2">
    <citation type="submission" date="2003-10" db="EMBL/GenBank/DDBJ databases">
        <authorList>
            <person name="Chain P.S.G."/>
            <person name="Malfatti S.A."/>
            <person name="Hajjaj A."/>
            <person name="Vergez L.M."/>
            <person name="Do L.H."/>
            <person name="Smith K.L."/>
            <person name="McCready P.M."/>
        </authorList>
    </citation>
    <scope>NUCLEOTIDE SEQUENCE [GENOMIC RNA]</scope>
    <source>
        <strain>pp3/guinea pig lethal</strain>
        <strain>pp4/guinea pig nonlethal</strain>
    </source>
</reference>
<reference key="3">
    <citation type="submission" date="2003-10" db="EMBL/GenBank/DDBJ databases">
        <authorList>
            <person name="Ichou M.A."/>
            <person name="Paragas J."/>
            <person name="Jahrling P.B."/>
            <person name="Ibrahim M.S."/>
            <person name="Lofts L."/>
            <person name="Hevey M."/>
            <person name="Schmaljohn A."/>
        </authorList>
    </citation>
    <scope>NUCLEOTIDE SEQUENCE [GENOMIC RNA]</scope>
    <source>
        <strain>pp3/guinea pig lethal</strain>
        <strain>pp4/guinea pig nonlethal</strain>
    </source>
</reference>
<reference key="4">
    <citation type="journal article" date="2006" name="J. Virol.">
        <title>Rescue of recombinant Marburg virus from cDNA is dependent on nucleocapsid protein VP30.</title>
        <authorList>
            <person name="Enterlein S."/>
            <person name="Volchkov V."/>
            <person name="Weik M."/>
            <person name="Kolesnikova L."/>
            <person name="Volchkova V."/>
            <person name="Klenk H.-D."/>
            <person name="Muehlberger E."/>
        </authorList>
    </citation>
    <scope>NUCLEOTIDE SEQUENCE [GENOMIC RNA]</scope>
</reference>